<proteinExistence type="inferred from homology"/>
<feature type="chain" id="PRO_0000277999" description="Protein GrpE">
    <location>
        <begin position="1"/>
        <end position="178"/>
    </location>
</feature>
<keyword id="KW-0143">Chaperone</keyword>
<keyword id="KW-0963">Cytoplasm</keyword>
<keyword id="KW-0346">Stress response</keyword>
<dbReference type="EMBL" id="AE017197">
    <property type="protein sequence ID" value="AAU04084.1"/>
    <property type="molecule type" value="Genomic_DNA"/>
</dbReference>
<dbReference type="RefSeq" id="WP_011191064.1">
    <property type="nucleotide sequence ID" value="NC_006142.1"/>
</dbReference>
<dbReference type="SMR" id="Q68WA8"/>
<dbReference type="KEGG" id="rty:RT0620"/>
<dbReference type="eggNOG" id="COG0576">
    <property type="taxonomic scope" value="Bacteria"/>
</dbReference>
<dbReference type="HOGENOM" id="CLU_057217_6_2_5"/>
<dbReference type="OrthoDB" id="9789811at2"/>
<dbReference type="Proteomes" id="UP000000604">
    <property type="component" value="Chromosome"/>
</dbReference>
<dbReference type="GO" id="GO:0005737">
    <property type="term" value="C:cytoplasm"/>
    <property type="evidence" value="ECO:0007669"/>
    <property type="project" value="UniProtKB-SubCell"/>
</dbReference>
<dbReference type="GO" id="GO:0000774">
    <property type="term" value="F:adenyl-nucleotide exchange factor activity"/>
    <property type="evidence" value="ECO:0007669"/>
    <property type="project" value="InterPro"/>
</dbReference>
<dbReference type="GO" id="GO:0042803">
    <property type="term" value="F:protein homodimerization activity"/>
    <property type="evidence" value="ECO:0007669"/>
    <property type="project" value="InterPro"/>
</dbReference>
<dbReference type="GO" id="GO:0051087">
    <property type="term" value="F:protein-folding chaperone binding"/>
    <property type="evidence" value="ECO:0007669"/>
    <property type="project" value="InterPro"/>
</dbReference>
<dbReference type="GO" id="GO:0051082">
    <property type="term" value="F:unfolded protein binding"/>
    <property type="evidence" value="ECO:0007669"/>
    <property type="project" value="TreeGrafter"/>
</dbReference>
<dbReference type="GO" id="GO:0006457">
    <property type="term" value="P:protein folding"/>
    <property type="evidence" value="ECO:0007669"/>
    <property type="project" value="InterPro"/>
</dbReference>
<dbReference type="GO" id="GO:0030150">
    <property type="term" value="P:protein import into mitochondrial matrix"/>
    <property type="evidence" value="ECO:0007669"/>
    <property type="project" value="TreeGrafter"/>
</dbReference>
<dbReference type="CDD" id="cd00446">
    <property type="entry name" value="GrpE"/>
    <property type="match status" value="1"/>
</dbReference>
<dbReference type="FunFam" id="2.30.22.10:FF:000001">
    <property type="entry name" value="Protein GrpE"/>
    <property type="match status" value="1"/>
</dbReference>
<dbReference type="Gene3D" id="3.90.20.20">
    <property type="match status" value="1"/>
</dbReference>
<dbReference type="Gene3D" id="2.30.22.10">
    <property type="entry name" value="Head domain of nucleotide exchange factor GrpE"/>
    <property type="match status" value="1"/>
</dbReference>
<dbReference type="HAMAP" id="MF_01151">
    <property type="entry name" value="GrpE"/>
    <property type="match status" value="1"/>
</dbReference>
<dbReference type="InterPro" id="IPR000740">
    <property type="entry name" value="GrpE"/>
</dbReference>
<dbReference type="InterPro" id="IPR013805">
    <property type="entry name" value="GrpE_coiled_coil"/>
</dbReference>
<dbReference type="InterPro" id="IPR009012">
    <property type="entry name" value="GrpE_head"/>
</dbReference>
<dbReference type="NCBIfam" id="NF010758">
    <property type="entry name" value="PRK14161.1"/>
    <property type="match status" value="1"/>
</dbReference>
<dbReference type="PANTHER" id="PTHR21237">
    <property type="entry name" value="GRPE PROTEIN"/>
    <property type="match status" value="1"/>
</dbReference>
<dbReference type="PANTHER" id="PTHR21237:SF23">
    <property type="entry name" value="GRPE PROTEIN HOMOLOG, MITOCHONDRIAL"/>
    <property type="match status" value="1"/>
</dbReference>
<dbReference type="Pfam" id="PF01025">
    <property type="entry name" value="GrpE"/>
    <property type="match status" value="1"/>
</dbReference>
<dbReference type="PRINTS" id="PR00773">
    <property type="entry name" value="GRPEPROTEIN"/>
</dbReference>
<dbReference type="SUPFAM" id="SSF58014">
    <property type="entry name" value="Coiled-coil domain of nucleotide exchange factor GrpE"/>
    <property type="match status" value="1"/>
</dbReference>
<dbReference type="SUPFAM" id="SSF51064">
    <property type="entry name" value="Head domain of nucleotide exchange factor GrpE"/>
    <property type="match status" value="1"/>
</dbReference>
<dbReference type="PROSITE" id="PS01071">
    <property type="entry name" value="GRPE"/>
    <property type="match status" value="1"/>
</dbReference>
<sequence>MKDDNIENNNIEEENLNIETQVVANEEIALLKAEIKELQDKLIRTTAEIDNTRKRLEKARDEAKDYAIATFAKELLNVSDNLSRALAHKPSNADVEVTNIISGVQMTKDELDKIFHKHHIEEIKPEIGSMFDYNVHNAISHIEHPDHKPNSIITLMQSGYKIRDRLLRPATVQVVKKP</sequence>
<reference key="1">
    <citation type="journal article" date="2004" name="J. Bacteriol.">
        <title>Complete genome sequence of Rickettsia typhi and comparison with sequences of other Rickettsiae.</title>
        <authorList>
            <person name="McLeod M.P."/>
            <person name="Qin X."/>
            <person name="Karpathy S.E."/>
            <person name="Gioia J."/>
            <person name="Highlander S.K."/>
            <person name="Fox G.E."/>
            <person name="McNeill T.Z."/>
            <person name="Jiang H."/>
            <person name="Muzny D."/>
            <person name="Jacob L.S."/>
            <person name="Hawes A.C."/>
            <person name="Sodergren E."/>
            <person name="Gill R."/>
            <person name="Hume J."/>
            <person name="Morgan M."/>
            <person name="Fan G."/>
            <person name="Amin A.G."/>
            <person name="Gibbs R.A."/>
            <person name="Hong C."/>
            <person name="Yu X.-J."/>
            <person name="Walker D.H."/>
            <person name="Weinstock G.M."/>
        </authorList>
    </citation>
    <scope>NUCLEOTIDE SEQUENCE [LARGE SCALE GENOMIC DNA]</scope>
    <source>
        <strain>ATCC VR-144 / Wilmington</strain>
    </source>
</reference>
<name>GRPE_RICTY</name>
<evidence type="ECO:0000255" key="1">
    <source>
        <dbReference type="HAMAP-Rule" id="MF_01151"/>
    </source>
</evidence>
<protein>
    <recommendedName>
        <fullName evidence="1">Protein GrpE</fullName>
    </recommendedName>
    <alternativeName>
        <fullName evidence="1">HSP-70 cofactor</fullName>
    </alternativeName>
</protein>
<organism>
    <name type="scientific">Rickettsia typhi (strain ATCC VR-144 / Wilmington)</name>
    <dbReference type="NCBI Taxonomy" id="257363"/>
    <lineage>
        <taxon>Bacteria</taxon>
        <taxon>Pseudomonadati</taxon>
        <taxon>Pseudomonadota</taxon>
        <taxon>Alphaproteobacteria</taxon>
        <taxon>Rickettsiales</taxon>
        <taxon>Rickettsiaceae</taxon>
        <taxon>Rickettsieae</taxon>
        <taxon>Rickettsia</taxon>
        <taxon>typhus group</taxon>
    </lineage>
</organism>
<accession>Q68WA8</accession>
<gene>
    <name evidence="1" type="primary">grpE</name>
    <name type="ordered locus">RT0620</name>
</gene>
<comment type="function">
    <text evidence="1">Participates actively in the response to hyperosmotic and heat shock by preventing the aggregation of stress-denatured proteins, in association with DnaK and GrpE. It is the nucleotide exchange factor for DnaK and may function as a thermosensor. Unfolded proteins bind initially to DnaJ; upon interaction with the DnaJ-bound protein, DnaK hydrolyzes its bound ATP, resulting in the formation of a stable complex. GrpE releases ADP from DnaK; ATP binding to DnaK triggers the release of the substrate protein, thus completing the reaction cycle. Several rounds of ATP-dependent interactions between DnaJ, DnaK and GrpE are required for fully efficient folding.</text>
</comment>
<comment type="subunit">
    <text evidence="1">Homodimer.</text>
</comment>
<comment type="subcellular location">
    <subcellularLocation>
        <location evidence="1">Cytoplasm</location>
    </subcellularLocation>
</comment>
<comment type="similarity">
    <text evidence="1">Belongs to the GrpE family.</text>
</comment>